<reference key="1">
    <citation type="journal article" date="1991" name="Mol. Microbiol.">
        <title>Sequential activation of dual promoters by different sigma factors maintains spoVJ expression during successive developmental stages of Bacillus subtilis.</title>
        <authorList>
            <person name="Foulger D."/>
            <person name="Errington J."/>
        </authorList>
    </citation>
    <scope>NUCLEOTIDE SEQUENCE [GENOMIC DNA]</scope>
    <source>
        <strain>168</strain>
    </source>
</reference>
<reference key="2">
    <citation type="submission" date="1997-02" db="EMBL/GenBank/DDBJ databases">
        <title>Sequencing of a 26 kb region of the Bacillus subtilis genome downstream of spoVJ.</title>
        <authorList>
            <person name="Borchert S."/>
            <person name="Klein C."/>
            <person name="Piksa B."/>
            <person name="Hammelmann M."/>
            <person name="Entian K.-D."/>
        </authorList>
    </citation>
    <scope>NUCLEOTIDE SEQUENCE [GENOMIC DNA]</scope>
</reference>
<reference key="3">
    <citation type="journal article" date="1997" name="Nature">
        <title>The complete genome sequence of the Gram-positive bacterium Bacillus subtilis.</title>
        <authorList>
            <person name="Kunst F."/>
            <person name="Ogasawara N."/>
            <person name="Moszer I."/>
            <person name="Albertini A.M."/>
            <person name="Alloni G."/>
            <person name="Azevedo V."/>
            <person name="Bertero M.G."/>
            <person name="Bessieres P."/>
            <person name="Bolotin A."/>
            <person name="Borchert S."/>
            <person name="Borriss R."/>
            <person name="Boursier L."/>
            <person name="Brans A."/>
            <person name="Braun M."/>
            <person name="Brignell S.C."/>
            <person name="Bron S."/>
            <person name="Brouillet S."/>
            <person name="Bruschi C.V."/>
            <person name="Caldwell B."/>
            <person name="Capuano V."/>
            <person name="Carter N.M."/>
            <person name="Choi S.-K."/>
            <person name="Codani J.-J."/>
            <person name="Connerton I.F."/>
            <person name="Cummings N.J."/>
            <person name="Daniel R.A."/>
            <person name="Denizot F."/>
            <person name="Devine K.M."/>
            <person name="Duesterhoeft A."/>
            <person name="Ehrlich S.D."/>
            <person name="Emmerson P.T."/>
            <person name="Entian K.-D."/>
            <person name="Errington J."/>
            <person name="Fabret C."/>
            <person name="Ferrari E."/>
            <person name="Foulger D."/>
            <person name="Fritz C."/>
            <person name="Fujita M."/>
            <person name="Fujita Y."/>
            <person name="Fuma S."/>
            <person name="Galizzi A."/>
            <person name="Galleron N."/>
            <person name="Ghim S.-Y."/>
            <person name="Glaser P."/>
            <person name="Goffeau A."/>
            <person name="Golightly E.J."/>
            <person name="Grandi G."/>
            <person name="Guiseppi G."/>
            <person name="Guy B.J."/>
            <person name="Haga K."/>
            <person name="Haiech J."/>
            <person name="Harwood C.R."/>
            <person name="Henaut A."/>
            <person name="Hilbert H."/>
            <person name="Holsappel S."/>
            <person name="Hosono S."/>
            <person name="Hullo M.-F."/>
            <person name="Itaya M."/>
            <person name="Jones L.-M."/>
            <person name="Joris B."/>
            <person name="Karamata D."/>
            <person name="Kasahara Y."/>
            <person name="Klaerr-Blanchard M."/>
            <person name="Klein C."/>
            <person name="Kobayashi Y."/>
            <person name="Koetter P."/>
            <person name="Koningstein G."/>
            <person name="Krogh S."/>
            <person name="Kumano M."/>
            <person name="Kurita K."/>
            <person name="Lapidus A."/>
            <person name="Lardinois S."/>
            <person name="Lauber J."/>
            <person name="Lazarevic V."/>
            <person name="Lee S.-M."/>
            <person name="Levine A."/>
            <person name="Liu H."/>
            <person name="Masuda S."/>
            <person name="Mauel C."/>
            <person name="Medigue C."/>
            <person name="Medina N."/>
            <person name="Mellado R.P."/>
            <person name="Mizuno M."/>
            <person name="Moestl D."/>
            <person name="Nakai S."/>
            <person name="Noback M."/>
            <person name="Noone D."/>
            <person name="O'Reilly M."/>
            <person name="Ogawa K."/>
            <person name="Ogiwara A."/>
            <person name="Oudega B."/>
            <person name="Park S.-H."/>
            <person name="Parro V."/>
            <person name="Pohl T.M."/>
            <person name="Portetelle D."/>
            <person name="Porwollik S."/>
            <person name="Prescott A.M."/>
            <person name="Presecan E."/>
            <person name="Pujic P."/>
            <person name="Purnelle B."/>
            <person name="Rapoport G."/>
            <person name="Rey M."/>
            <person name="Reynolds S."/>
            <person name="Rieger M."/>
            <person name="Rivolta C."/>
            <person name="Rocha E."/>
            <person name="Roche B."/>
            <person name="Rose M."/>
            <person name="Sadaie Y."/>
            <person name="Sato T."/>
            <person name="Scanlan E."/>
            <person name="Schleich S."/>
            <person name="Schroeter R."/>
            <person name="Scoffone F."/>
            <person name="Sekiguchi J."/>
            <person name="Sekowska A."/>
            <person name="Seror S.J."/>
            <person name="Serror P."/>
            <person name="Shin B.-S."/>
            <person name="Soldo B."/>
            <person name="Sorokin A."/>
            <person name="Tacconi E."/>
            <person name="Takagi T."/>
            <person name="Takahashi H."/>
            <person name="Takemaru K."/>
            <person name="Takeuchi M."/>
            <person name="Tamakoshi A."/>
            <person name="Tanaka T."/>
            <person name="Terpstra P."/>
            <person name="Tognoni A."/>
            <person name="Tosato V."/>
            <person name="Uchiyama S."/>
            <person name="Vandenbol M."/>
            <person name="Vannier F."/>
            <person name="Vassarotti A."/>
            <person name="Viari A."/>
            <person name="Wambutt R."/>
            <person name="Wedler E."/>
            <person name="Wedler H."/>
            <person name="Weitzenegger T."/>
            <person name="Winters P."/>
            <person name="Wipat A."/>
            <person name="Yamamoto H."/>
            <person name="Yamane K."/>
            <person name="Yasumoto K."/>
            <person name="Yata K."/>
            <person name="Yoshida K."/>
            <person name="Yoshikawa H.-F."/>
            <person name="Zumstein E."/>
            <person name="Yoshikawa H."/>
            <person name="Danchin A."/>
        </authorList>
    </citation>
    <scope>NUCLEOTIDE SEQUENCE [LARGE SCALE GENOMIC DNA]</scope>
    <source>
        <strain>168</strain>
    </source>
</reference>
<reference key="4">
    <citation type="journal article" date="2009" name="Microbiology">
        <title>From a consortium sequence to a unified sequence: the Bacillus subtilis 168 reference genome a decade later.</title>
        <authorList>
            <person name="Barbe V."/>
            <person name="Cruveiller S."/>
            <person name="Kunst F."/>
            <person name="Lenoble P."/>
            <person name="Meurice G."/>
            <person name="Sekowska A."/>
            <person name="Vallenet D."/>
            <person name="Wang T."/>
            <person name="Moszer I."/>
            <person name="Medigue C."/>
            <person name="Danchin A."/>
        </authorList>
    </citation>
    <scope>SEQUENCE REVISION TO 37 AND 159</scope>
</reference>
<name>SP5K_BACSU</name>
<dbReference type="EMBL" id="X59412">
    <property type="protein sequence ID" value="CAA42049.1"/>
    <property type="molecule type" value="Genomic_DNA"/>
</dbReference>
<dbReference type="EMBL" id="U66480">
    <property type="protein sequence ID" value="AAB41076.1"/>
    <property type="molecule type" value="Genomic_DNA"/>
</dbReference>
<dbReference type="EMBL" id="AL009126">
    <property type="protein sequence ID" value="CAB13626.2"/>
    <property type="molecule type" value="Genomic_DNA"/>
</dbReference>
<dbReference type="PIR" id="S16301">
    <property type="entry name" value="S16301"/>
</dbReference>
<dbReference type="RefSeq" id="NP_389624.2">
    <property type="nucleotide sequence ID" value="NC_000964.3"/>
</dbReference>
<dbReference type="RefSeq" id="WP_003231746.1">
    <property type="nucleotide sequence ID" value="NZ_OZ025638.1"/>
</dbReference>
<dbReference type="SMR" id="P27643"/>
<dbReference type="FunCoup" id="P27643">
    <property type="interactions" value="41"/>
</dbReference>
<dbReference type="STRING" id="224308.BSU17420"/>
<dbReference type="PaxDb" id="224308-BSU17420"/>
<dbReference type="EnsemblBacteria" id="CAB13626">
    <property type="protein sequence ID" value="CAB13626"/>
    <property type="gene ID" value="BSU_17420"/>
</dbReference>
<dbReference type="GeneID" id="86873744"/>
<dbReference type="GeneID" id="940089"/>
<dbReference type="KEGG" id="bsu:BSU17420"/>
<dbReference type="PATRIC" id="fig|224308.179.peg.1889"/>
<dbReference type="eggNOG" id="COG0464">
    <property type="taxonomic scope" value="Bacteria"/>
</dbReference>
<dbReference type="InParanoid" id="P27643"/>
<dbReference type="OrthoDB" id="9806903at2"/>
<dbReference type="PhylomeDB" id="P27643"/>
<dbReference type="BioCyc" id="BSUB:BSU17420-MONOMER"/>
<dbReference type="Proteomes" id="UP000001570">
    <property type="component" value="Chromosome"/>
</dbReference>
<dbReference type="GO" id="GO:0005524">
    <property type="term" value="F:ATP binding"/>
    <property type="evidence" value="ECO:0007669"/>
    <property type="project" value="UniProtKB-KW"/>
</dbReference>
<dbReference type="GO" id="GO:0016887">
    <property type="term" value="F:ATP hydrolysis activity"/>
    <property type="evidence" value="ECO:0000318"/>
    <property type="project" value="GO_Central"/>
</dbReference>
<dbReference type="GO" id="GO:0030435">
    <property type="term" value="P:sporulation resulting in formation of a cellular spore"/>
    <property type="evidence" value="ECO:0007669"/>
    <property type="project" value="UniProtKB-KW"/>
</dbReference>
<dbReference type="CDD" id="cd00009">
    <property type="entry name" value="AAA"/>
    <property type="match status" value="1"/>
</dbReference>
<dbReference type="FunFam" id="3.40.50.300:FF:000216">
    <property type="entry name" value="Type VII secretion ATPase EccA"/>
    <property type="match status" value="1"/>
</dbReference>
<dbReference type="Gene3D" id="1.10.8.60">
    <property type="match status" value="1"/>
</dbReference>
<dbReference type="Gene3D" id="3.40.50.300">
    <property type="entry name" value="P-loop containing nucleotide triphosphate hydrolases"/>
    <property type="match status" value="1"/>
</dbReference>
<dbReference type="InterPro" id="IPR003593">
    <property type="entry name" value="AAA+_ATPase"/>
</dbReference>
<dbReference type="InterPro" id="IPR041627">
    <property type="entry name" value="AAA_lid_6"/>
</dbReference>
<dbReference type="InterPro" id="IPR003959">
    <property type="entry name" value="ATPase_AAA_core"/>
</dbReference>
<dbReference type="InterPro" id="IPR000641">
    <property type="entry name" value="CbxX/CfxQ"/>
</dbReference>
<dbReference type="InterPro" id="IPR050773">
    <property type="entry name" value="CbxX/CfxQ_RuBisCO_ESX"/>
</dbReference>
<dbReference type="InterPro" id="IPR027417">
    <property type="entry name" value="P-loop_NTPase"/>
</dbReference>
<dbReference type="InterPro" id="IPR014232">
    <property type="entry name" value="Spore_V_K"/>
</dbReference>
<dbReference type="NCBIfam" id="TIGR02881">
    <property type="entry name" value="spore_V_K"/>
    <property type="match status" value="1"/>
</dbReference>
<dbReference type="PANTHER" id="PTHR43392">
    <property type="entry name" value="AAA-TYPE ATPASE FAMILY PROTEIN / ANKYRIN REPEAT FAMILY PROTEIN"/>
    <property type="match status" value="1"/>
</dbReference>
<dbReference type="PANTHER" id="PTHR43392:SF2">
    <property type="entry name" value="AAA-TYPE ATPASE FAMILY PROTEIN _ ANKYRIN REPEAT FAMILY PROTEIN"/>
    <property type="match status" value="1"/>
</dbReference>
<dbReference type="Pfam" id="PF00004">
    <property type="entry name" value="AAA"/>
    <property type="match status" value="1"/>
</dbReference>
<dbReference type="Pfam" id="PF17866">
    <property type="entry name" value="AAA_lid_6"/>
    <property type="match status" value="1"/>
</dbReference>
<dbReference type="PRINTS" id="PR00819">
    <property type="entry name" value="CBXCFQXSUPER"/>
</dbReference>
<dbReference type="SMART" id="SM00382">
    <property type="entry name" value="AAA"/>
    <property type="match status" value="1"/>
</dbReference>
<dbReference type="SUPFAM" id="SSF52540">
    <property type="entry name" value="P-loop containing nucleoside triphosphate hydrolases"/>
    <property type="match status" value="1"/>
</dbReference>
<gene>
    <name type="primary">spoVK</name>
    <name type="synonym">spoVJ</name>
    <name type="ordered locus">BSU17420</name>
</gene>
<protein>
    <recommendedName>
        <fullName>Stage V sporulation protein K</fullName>
    </recommendedName>
</protein>
<evidence type="ECO:0000255" key="1"/>
<evidence type="ECO:0000305" key="2"/>
<proteinExistence type="evidence at transcript level"/>
<comment type="developmental stage">
    <text>Mutations in spoVJ block sporulation at a late stage. Probably only functions late in development.</text>
</comment>
<comment type="similarity">
    <text evidence="2">Belongs to the CbxX/CfxQ family.</text>
</comment>
<keyword id="KW-0067">ATP-binding</keyword>
<keyword id="KW-0547">Nucleotide-binding</keyword>
<keyword id="KW-1185">Reference proteome</keyword>
<keyword id="KW-0749">Sporulation</keyword>
<feature type="chain" id="PRO_0000063043" description="Stage V sporulation protein K">
    <location>
        <begin position="1"/>
        <end position="322"/>
    </location>
</feature>
<feature type="binding site" evidence="1">
    <location>
        <begin position="99"/>
        <end position="106"/>
    </location>
    <ligand>
        <name>ATP</name>
        <dbReference type="ChEBI" id="CHEBI:30616"/>
    </ligand>
</feature>
<feature type="sequence conflict" description="In Ref. 2; AAB41076." evidence="2" ref="2">
    <original>A</original>
    <variation>T</variation>
    <location>
        <position position="37"/>
    </location>
</feature>
<feature type="sequence conflict" description="In Ref. 2; AAB41076." evidence="2" ref="2">
    <original>L</original>
    <variation>W</variation>
    <location>
        <position position="159"/>
    </location>
</feature>
<organism>
    <name type="scientific">Bacillus subtilis (strain 168)</name>
    <dbReference type="NCBI Taxonomy" id="224308"/>
    <lineage>
        <taxon>Bacteria</taxon>
        <taxon>Bacillati</taxon>
        <taxon>Bacillota</taxon>
        <taxon>Bacilli</taxon>
        <taxon>Bacillales</taxon>
        <taxon>Bacillaceae</taxon>
        <taxon>Bacillus</taxon>
    </lineage>
</organism>
<accession>P27643</accession>
<accession>P94477</accession>
<sequence length="322" mass="36574">MLERAVTYKNNGQINIILNGQKQVLTNAEAEAEYQAALQKNEAKHGILKEIEKEMSALVGMEEMKRNIKEIYAWIFVNQKRAEQGLKVGKQALHMMFKGNPGTGKTTVARLIGKLFFEMNVLSKGHLIEAERADLVGEYIGHTAQKTRDLIKKSLGGILFIDEAYSLARGGEKDFGKEAIDTLVKHMEDKQHEFILILAGYSREMDHFLSLNPGLQSRFPISIDFPDYSVTQLMEIAKRMIDEREYQLSQEAEWKLKDYLMTVKSTTSPIKFSNGRFVRNVIEKSIRAQAMRLLMGDQYLKSDLMTIKSQDLSIKEEASGSA</sequence>